<feature type="chain" id="PRO_0000191989" description="Flagellar biosynthetic protein FliP">
    <location>
        <begin position="1"/>
        <end position="271"/>
    </location>
</feature>
<feature type="transmembrane region" description="Helical" evidence="2">
    <location>
        <begin position="5"/>
        <end position="25"/>
    </location>
</feature>
<feature type="transmembrane region" description="Helical" evidence="2">
    <location>
        <begin position="70"/>
        <end position="90"/>
    </location>
</feature>
<feature type="transmembrane region" description="Helical" evidence="2">
    <location>
        <begin position="113"/>
        <end position="133"/>
    </location>
</feature>
<feature type="transmembrane region" description="Helical" evidence="2">
    <location>
        <begin position="190"/>
        <end position="210"/>
    </location>
</feature>
<feature type="transmembrane region" description="Helical" evidence="2">
    <location>
        <begin position="212"/>
        <end position="232"/>
    </location>
</feature>
<feature type="transmembrane region" description="Helical" evidence="2">
    <location>
        <begin position="244"/>
        <end position="264"/>
    </location>
</feature>
<name>FLIP_TREDE</name>
<organism>
    <name type="scientific">Treponema denticola (strain ATCC 35405 / DSM 14222 / CIP 103919 / JCM 8153 / KCTC 15104)</name>
    <dbReference type="NCBI Taxonomy" id="243275"/>
    <lineage>
        <taxon>Bacteria</taxon>
        <taxon>Pseudomonadati</taxon>
        <taxon>Spirochaetota</taxon>
        <taxon>Spirochaetia</taxon>
        <taxon>Spirochaetales</taxon>
        <taxon>Treponemataceae</taxon>
        <taxon>Treponema</taxon>
    </lineage>
</organism>
<comment type="function">
    <text evidence="1">Plays a role in the flagellum-specific transport system.</text>
</comment>
<comment type="subcellular location">
    <subcellularLocation>
        <location evidence="3">Cell membrane</location>
        <topology evidence="3">Multi-pass membrane protein</topology>
    </subcellularLocation>
    <subcellularLocation>
        <location evidence="1">Bacterial flagellum basal body</location>
    </subcellularLocation>
</comment>
<comment type="similarity">
    <text evidence="3">Belongs to the FliP/MopC/SpaP family.</text>
</comment>
<gene>
    <name type="primary">fliP</name>
    <name type="ordered locus">TDE_2760</name>
</gene>
<proteinExistence type="inferred from homology"/>
<accession>Q9X5A6</accession>
<sequence>MKKNLLILVFFGMILFIPVQVFSQSRFPEGTTAGRTDADPNRQAGRIPFIDFSIREPSTNKDVAFSVQLLIFITLISIAPSLLLLMTSFLRLSIVLDFVKRALSLQQVPPTQVLNGIAFFLTLFIMWPTFTQIYNNAYKPMSEGQIGIEEAYREAEKPMRYFMYKQMQKNPTHIRTFMAMSKLPKPDTLADVPTHILIAAFILHELTIAFQIGIFLYLPFIIIDMIVASILMSMGMIMLPPVQISMPFKLILFVMVDGWGLLFGKLFESFL</sequence>
<dbReference type="EMBL" id="AF122909">
    <property type="protein sequence ID" value="AAD20625.1"/>
    <property type="molecule type" value="Genomic_DNA"/>
</dbReference>
<dbReference type="EMBL" id="AE017226">
    <property type="protein sequence ID" value="AAS13277.1"/>
    <property type="molecule type" value="Genomic_DNA"/>
</dbReference>
<dbReference type="RefSeq" id="NP_973358.1">
    <property type="nucleotide sequence ID" value="NC_002967.9"/>
</dbReference>
<dbReference type="RefSeq" id="WP_002680826.1">
    <property type="nucleotide sequence ID" value="NC_002967.9"/>
</dbReference>
<dbReference type="SMR" id="Q9X5A6"/>
<dbReference type="STRING" id="243275.TDE_2760"/>
<dbReference type="PaxDb" id="243275-TDE_2760"/>
<dbReference type="GeneID" id="2740727"/>
<dbReference type="KEGG" id="tde:TDE_2760"/>
<dbReference type="PATRIC" id="fig|243275.7.peg.2604"/>
<dbReference type="eggNOG" id="COG1338">
    <property type="taxonomic scope" value="Bacteria"/>
</dbReference>
<dbReference type="HOGENOM" id="CLU_042028_1_0_12"/>
<dbReference type="OrthoDB" id="9805111at2"/>
<dbReference type="Proteomes" id="UP000008212">
    <property type="component" value="Chromosome"/>
</dbReference>
<dbReference type="GO" id="GO:0009425">
    <property type="term" value="C:bacterial-type flagellum basal body"/>
    <property type="evidence" value="ECO:0007669"/>
    <property type="project" value="UniProtKB-SubCell"/>
</dbReference>
<dbReference type="GO" id="GO:0005886">
    <property type="term" value="C:plasma membrane"/>
    <property type="evidence" value="ECO:0007669"/>
    <property type="project" value="UniProtKB-SubCell"/>
</dbReference>
<dbReference type="GO" id="GO:0044781">
    <property type="term" value="P:bacterial-type flagellum organization"/>
    <property type="evidence" value="ECO:0007669"/>
    <property type="project" value="UniProtKB-KW"/>
</dbReference>
<dbReference type="GO" id="GO:0009306">
    <property type="term" value="P:protein secretion"/>
    <property type="evidence" value="ECO:0007669"/>
    <property type="project" value="InterPro"/>
</dbReference>
<dbReference type="InterPro" id="IPR005837">
    <property type="entry name" value="FliP"/>
</dbReference>
<dbReference type="InterPro" id="IPR005838">
    <property type="entry name" value="T3SS_IM_P"/>
</dbReference>
<dbReference type="NCBIfam" id="TIGR01103">
    <property type="entry name" value="fliP"/>
    <property type="match status" value="1"/>
</dbReference>
<dbReference type="NCBIfam" id="NF009438">
    <property type="entry name" value="PRK12797.1"/>
    <property type="match status" value="1"/>
</dbReference>
<dbReference type="PANTHER" id="PTHR30587">
    <property type="entry name" value="FLAGELLAR BIOSYNTHETIC PROTEIN FLIP"/>
    <property type="match status" value="1"/>
</dbReference>
<dbReference type="PANTHER" id="PTHR30587:SF0">
    <property type="entry name" value="FLAGELLAR BIOSYNTHETIC PROTEIN FLIP"/>
    <property type="match status" value="1"/>
</dbReference>
<dbReference type="Pfam" id="PF00813">
    <property type="entry name" value="FliP"/>
    <property type="match status" value="1"/>
</dbReference>
<dbReference type="PRINTS" id="PR00951">
    <property type="entry name" value="FLGBIOSNFLIP"/>
</dbReference>
<dbReference type="PRINTS" id="PR01302">
    <property type="entry name" value="TYPE3IMPPROT"/>
</dbReference>
<dbReference type="PROSITE" id="PS01060">
    <property type="entry name" value="FLIP_1"/>
    <property type="match status" value="1"/>
</dbReference>
<dbReference type="PROSITE" id="PS01061">
    <property type="entry name" value="FLIP_2"/>
    <property type="match status" value="1"/>
</dbReference>
<protein>
    <recommendedName>
        <fullName>Flagellar biosynthetic protein FliP</fullName>
    </recommendedName>
</protein>
<evidence type="ECO:0000250" key="1"/>
<evidence type="ECO:0000255" key="2"/>
<evidence type="ECO:0000305" key="3"/>
<reference key="1">
    <citation type="submission" date="1999-01" db="EMBL/GenBank/DDBJ databases">
        <title>Sequences of the tap1, flgD, flgE, orf4, motA, motB, fliL, fliM, fliY, and fliP Treponema denticola genes.</title>
        <authorList>
            <person name="Stamm L.V."/>
            <person name="Bergen H.L."/>
        </authorList>
    </citation>
    <scope>NUCLEOTIDE SEQUENCE [GENOMIC DNA]</scope>
    <source>
        <strain>ATCC 35405 / DSM 14222 / CIP 103919 / JCM 8153 / KCTC 15104</strain>
    </source>
</reference>
<reference key="2">
    <citation type="journal article" date="2004" name="Proc. Natl. Acad. Sci. U.S.A.">
        <title>Comparison of the genome of the oral pathogen Treponema denticola with other spirochete genomes.</title>
        <authorList>
            <person name="Seshadri R."/>
            <person name="Myers G.S.A."/>
            <person name="Tettelin H."/>
            <person name="Eisen J.A."/>
            <person name="Heidelberg J.F."/>
            <person name="Dodson R.J."/>
            <person name="Davidsen T.M."/>
            <person name="DeBoy R.T."/>
            <person name="Fouts D.E."/>
            <person name="Haft D.H."/>
            <person name="Selengut J."/>
            <person name="Ren Q."/>
            <person name="Brinkac L.M."/>
            <person name="Madupu R."/>
            <person name="Kolonay J.F."/>
            <person name="Durkin S.A."/>
            <person name="Daugherty S.C."/>
            <person name="Shetty J."/>
            <person name="Shvartsbeyn A."/>
            <person name="Gebregeorgis E."/>
            <person name="Geer K."/>
            <person name="Tsegaye G."/>
            <person name="Malek J.A."/>
            <person name="Ayodeji B."/>
            <person name="Shatsman S."/>
            <person name="McLeod M.P."/>
            <person name="Smajs D."/>
            <person name="Howell J.K."/>
            <person name="Pal S."/>
            <person name="Amin A."/>
            <person name="Vashisth P."/>
            <person name="McNeill T.Z."/>
            <person name="Xiang Q."/>
            <person name="Sodergren E."/>
            <person name="Baca E."/>
            <person name="Weinstock G.M."/>
            <person name="Norris S.J."/>
            <person name="Fraser C.M."/>
            <person name="Paulsen I.T."/>
        </authorList>
    </citation>
    <scope>NUCLEOTIDE SEQUENCE [LARGE SCALE GENOMIC DNA]</scope>
    <source>
        <strain>ATCC 35405 / DSM 14222 / CIP 103919 / JCM 8153 / KCTC 15104</strain>
    </source>
</reference>
<keyword id="KW-0975">Bacterial flagellum</keyword>
<keyword id="KW-1005">Bacterial flagellum biogenesis</keyword>
<keyword id="KW-1006">Bacterial flagellum protein export</keyword>
<keyword id="KW-1003">Cell membrane</keyword>
<keyword id="KW-0472">Membrane</keyword>
<keyword id="KW-0653">Protein transport</keyword>
<keyword id="KW-1185">Reference proteome</keyword>
<keyword id="KW-0812">Transmembrane</keyword>
<keyword id="KW-1133">Transmembrane helix</keyword>
<keyword id="KW-0813">Transport</keyword>